<dbReference type="EMBL" id="X52378">
    <property type="protein sequence ID" value="CAA36604.1"/>
    <property type="molecule type" value="mRNA"/>
</dbReference>
<dbReference type="EMBL" id="M33326">
    <property type="protein sequence ID" value="AAA59914.1"/>
    <property type="molecule type" value="mRNA"/>
</dbReference>
<dbReference type="EMBL" id="D90064">
    <property type="protein sequence ID" value="BAA14108.1"/>
    <property type="molecule type" value="mRNA"/>
</dbReference>
<dbReference type="EMBL" id="AC004558">
    <property type="protein sequence ID" value="AAC13659.1"/>
    <property type="molecule type" value="Genomic_DNA"/>
</dbReference>
<dbReference type="EMBL" id="BC026263">
    <property type="protein sequence ID" value="AAH26263.1"/>
    <property type="molecule type" value="mRNA"/>
</dbReference>
<dbReference type="EMBL" id="Z95119">
    <property type="protein sequence ID" value="CAB08298.1"/>
    <property type="molecule type" value="Genomic_DNA"/>
</dbReference>
<dbReference type="CCDS" id="CCDS12610.1"/>
<dbReference type="PIR" id="S13524">
    <property type="entry name" value="A34815"/>
</dbReference>
<dbReference type="RefSeq" id="NP_001807.2">
    <property type="nucleotide sequence ID" value="NM_001816.3"/>
</dbReference>
<dbReference type="RefSeq" id="XP_016881684.1">
    <property type="nucleotide sequence ID" value="XM_017026195.2"/>
</dbReference>
<dbReference type="PDB" id="2DKS">
    <property type="method" value="NMR"/>
    <property type="chains" value="A=33-149"/>
</dbReference>
<dbReference type="PDB" id="4WTZ">
    <property type="method" value="X-ray"/>
    <property type="resolution" value="2.52 A"/>
    <property type="chains" value="G/H/I/J/K/L=34-141"/>
</dbReference>
<dbReference type="PDB" id="4Y88">
    <property type="method" value="X-ray"/>
    <property type="resolution" value="1.45 A"/>
    <property type="chains" value="A=34-141"/>
</dbReference>
<dbReference type="PDB" id="4YIQ">
    <property type="method" value="X-ray"/>
    <property type="resolution" value="1.85 A"/>
    <property type="chains" value="A/C=34-141"/>
</dbReference>
<dbReference type="PDBsum" id="2DKS"/>
<dbReference type="PDBsum" id="4WTZ"/>
<dbReference type="PDBsum" id="4Y88"/>
<dbReference type="PDBsum" id="4YIQ"/>
<dbReference type="SMR" id="P31997"/>
<dbReference type="BioGRID" id="107514">
    <property type="interactions" value="122"/>
</dbReference>
<dbReference type="FunCoup" id="P31997">
    <property type="interactions" value="52"/>
</dbReference>
<dbReference type="IntAct" id="P31997">
    <property type="interactions" value="119"/>
</dbReference>
<dbReference type="STRING" id="9606.ENSP00000244336"/>
<dbReference type="GlyConnect" id="1072">
    <property type="glycosylation" value="5 N-Linked glycans (2 sites)"/>
</dbReference>
<dbReference type="GlyCosmos" id="P31997">
    <property type="glycosylation" value="11 sites, 5 glycans"/>
</dbReference>
<dbReference type="GlyGen" id="P31997">
    <property type="glycosylation" value="11 sites, 10 N-linked glycans (4 sites)"/>
</dbReference>
<dbReference type="iPTMnet" id="P31997"/>
<dbReference type="PhosphoSitePlus" id="P31997"/>
<dbReference type="BioMuta" id="CEACAM8"/>
<dbReference type="DMDM" id="6166048"/>
<dbReference type="CPTAC" id="CPTAC-1306"/>
<dbReference type="CPTAC" id="CPTAC-5958"/>
<dbReference type="jPOST" id="P31997"/>
<dbReference type="MassIVE" id="P31997"/>
<dbReference type="PaxDb" id="9606-ENSP00000244336"/>
<dbReference type="PeptideAtlas" id="P31997"/>
<dbReference type="ProteomicsDB" id="54829"/>
<dbReference type="ABCD" id="P31997">
    <property type="antibodies" value="2 sequenced antibodies"/>
</dbReference>
<dbReference type="Antibodypedia" id="17485">
    <property type="antibodies" value="550 antibodies from 40 providers"/>
</dbReference>
<dbReference type="CPTC" id="P31997">
    <property type="antibodies" value="2 antibodies"/>
</dbReference>
<dbReference type="DNASU" id="1088"/>
<dbReference type="Ensembl" id="ENST00000244336.10">
    <property type="protein sequence ID" value="ENSP00000244336.5"/>
    <property type="gene ID" value="ENSG00000124469.12"/>
</dbReference>
<dbReference type="GeneID" id="1088"/>
<dbReference type="KEGG" id="hsa:1088"/>
<dbReference type="MANE-Select" id="ENST00000244336.10">
    <property type="protein sequence ID" value="ENSP00000244336.5"/>
    <property type="RefSeq nucleotide sequence ID" value="NM_001816.4"/>
    <property type="RefSeq protein sequence ID" value="NP_001807.2"/>
</dbReference>
<dbReference type="AGR" id="HGNC:1820"/>
<dbReference type="CTD" id="1088"/>
<dbReference type="DisGeNET" id="1088"/>
<dbReference type="GeneCards" id="CEACAM8"/>
<dbReference type="HGNC" id="HGNC:1820">
    <property type="gene designation" value="CEACAM8"/>
</dbReference>
<dbReference type="HPA" id="ENSG00000124469">
    <property type="expression patterns" value="Tissue enriched (bone)"/>
</dbReference>
<dbReference type="MIM" id="615747">
    <property type="type" value="gene"/>
</dbReference>
<dbReference type="neXtProt" id="NX_P31997"/>
<dbReference type="OpenTargets" id="ENSG00000124469"/>
<dbReference type="PharmGKB" id="PA26364"/>
<dbReference type="VEuPathDB" id="HostDB:ENSG00000124469"/>
<dbReference type="eggNOG" id="ENOG502RXPD">
    <property type="taxonomic scope" value="Eukaryota"/>
</dbReference>
<dbReference type="GeneTree" id="ENSGT01100000263479"/>
<dbReference type="InParanoid" id="P31997"/>
<dbReference type="OMA" id="CHAMNPA"/>
<dbReference type="OrthoDB" id="6159398at2759"/>
<dbReference type="PAN-GO" id="P31997">
    <property type="GO annotations" value="2 GO annotations based on evolutionary models"/>
</dbReference>
<dbReference type="PhylomeDB" id="P31997"/>
<dbReference type="TreeFam" id="TF336859"/>
<dbReference type="PathwayCommons" id="P31997"/>
<dbReference type="Reactome" id="R-HSA-1566977">
    <property type="pathway name" value="Fibronectin matrix formation"/>
</dbReference>
<dbReference type="Reactome" id="R-HSA-202733">
    <property type="pathway name" value="Cell surface interactions at the vascular wall"/>
</dbReference>
<dbReference type="Reactome" id="R-HSA-6798695">
    <property type="pathway name" value="Neutrophil degranulation"/>
</dbReference>
<dbReference type="SignaLink" id="P31997"/>
<dbReference type="BioGRID-ORCS" id="1088">
    <property type="hits" value="16 hits in 1143 CRISPR screens"/>
</dbReference>
<dbReference type="EvolutionaryTrace" id="P31997"/>
<dbReference type="GeneWiki" id="CEACAM8"/>
<dbReference type="GenomeRNAi" id="1088"/>
<dbReference type="Pharos" id="P31997">
    <property type="development level" value="Tbio"/>
</dbReference>
<dbReference type="PRO" id="PR:P31997"/>
<dbReference type="Proteomes" id="UP000005640">
    <property type="component" value="Chromosome 19"/>
</dbReference>
<dbReference type="RNAct" id="P31997">
    <property type="molecule type" value="protein"/>
</dbReference>
<dbReference type="Bgee" id="ENSG00000124469">
    <property type="expression patterns" value="Expressed in trabecular bone tissue and 90 other cell types or tissues"/>
</dbReference>
<dbReference type="ExpressionAtlas" id="P31997">
    <property type="expression patterns" value="baseline and differential"/>
</dbReference>
<dbReference type="GO" id="GO:0035577">
    <property type="term" value="C:azurophil granule membrane"/>
    <property type="evidence" value="ECO:0000304"/>
    <property type="project" value="Reactome"/>
</dbReference>
<dbReference type="GO" id="GO:0009986">
    <property type="term" value="C:cell surface"/>
    <property type="evidence" value="ECO:0000314"/>
    <property type="project" value="UniProtKB"/>
</dbReference>
<dbReference type="GO" id="GO:0070062">
    <property type="term" value="C:extracellular exosome"/>
    <property type="evidence" value="ECO:0007005"/>
    <property type="project" value="UniProtKB"/>
</dbReference>
<dbReference type="GO" id="GO:0005615">
    <property type="term" value="C:extracellular space"/>
    <property type="evidence" value="ECO:0000314"/>
    <property type="project" value="UniProtKB"/>
</dbReference>
<dbReference type="GO" id="GO:0005886">
    <property type="term" value="C:plasma membrane"/>
    <property type="evidence" value="ECO:0000304"/>
    <property type="project" value="Reactome"/>
</dbReference>
<dbReference type="GO" id="GO:0098552">
    <property type="term" value="C:side of membrane"/>
    <property type="evidence" value="ECO:0007669"/>
    <property type="project" value="UniProtKB-KW"/>
</dbReference>
<dbReference type="GO" id="GO:0035579">
    <property type="term" value="C:specific granule membrane"/>
    <property type="evidence" value="ECO:0000304"/>
    <property type="project" value="Reactome"/>
</dbReference>
<dbReference type="GO" id="GO:0070821">
    <property type="term" value="C:tertiary granule membrane"/>
    <property type="evidence" value="ECO:0000304"/>
    <property type="project" value="Reactome"/>
</dbReference>
<dbReference type="GO" id="GO:0046982">
    <property type="term" value="F:protein heterodimerization activity"/>
    <property type="evidence" value="ECO:0000314"/>
    <property type="project" value="UniProtKB"/>
</dbReference>
<dbReference type="GO" id="GO:0007157">
    <property type="term" value="P:heterophilic cell-cell adhesion via plasma membrane cell adhesion molecules"/>
    <property type="evidence" value="ECO:0000315"/>
    <property type="project" value="UniProtKB"/>
</dbReference>
<dbReference type="GO" id="GO:0006955">
    <property type="term" value="P:immune response"/>
    <property type="evidence" value="ECO:0000304"/>
    <property type="project" value="ProtInc"/>
</dbReference>
<dbReference type="CDD" id="cd20948">
    <property type="entry name" value="IgC2_CEACAM5-like"/>
    <property type="match status" value="1"/>
</dbReference>
<dbReference type="CDD" id="cd05740">
    <property type="entry name" value="IgI_hCEACAM_2_4_6_like"/>
    <property type="match status" value="1"/>
</dbReference>
<dbReference type="CDD" id="cd05774">
    <property type="entry name" value="IgV_CEACAM_D1"/>
    <property type="match status" value="1"/>
</dbReference>
<dbReference type="FunFam" id="2.60.40.10:FF:000340">
    <property type="entry name" value="Carcinoembryonic antigen-related cell adhesion molecule 1"/>
    <property type="match status" value="1"/>
</dbReference>
<dbReference type="FunFam" id="2.60.40.10:FF:000517">
    <property type="entry name" value="Carcinoembryonic antigen-related cell adhesion molecule 1"/>
    <property type="match status" value="1"/>
</dbReference>
<dbReference type="FunFam" id="2.60.40.10:FF:000244">
    <property type="entry name" value="carcinoembryonic antigen-related cell adhesion molecule 16"/>
    <property type="match status" value="1"/>
</dbReference>
<dbReference type="Gene3D" id="2.60.40.10">
    <property type="entry name" value="Immunoglobulins"/>
    <property type="match status" value="3"/>
</dbReference>
<dbReference type="InterPro" id="IPR050831">
    <property type="entry name" value="CEA_cell_adhesion"/>
</dbReference>
<dbReference type="InterPro" id="IPR007110">
    <property type="entry name" value="Ig-like_dom"/>
</dbReference>
<dbReference type="InterPro" id="IPR036179">
    <property type="entry name" value="Ig-like_dom_sf"/>
</dbReference>
<dbReference type="InterPro" id="IPR013783">
    <property type="entry name" value="Ig-like_fold"/>
</dbReference>
<dbReference type="InterPro" id="IPR003599">
    <property type="entry name" value="Ig_sub"/>
</dbReference>
<dbReference type="InterPro" id="IPR003598">
    <property type="entry name" value="Ig_sub2"/>
</dbReference>
<dbReference type="InterPro" id="IPR013106">
    <property type="entry name" value="Ig_V-set"/>
</dbReference>
<dbReference type="PANTHER" id="PTHR44427">
    <property type="entry name" value="CARCINOEMBRYONIC ANTIGEN-RELATED CELL ADHESION MOLECULE 19"/>
    <property type="match status" value="1"/>
</dbReference>
<dbReference type="PANTHER" id="PTHR44427:SF20">
    <property type="entry name" value="CEA CELL ADHESION MOLECULE 8"/>
    <property type="match status" value="1"/>
</dbReference>
<dbReference type="Pfam" id="PF13895">
    <property type="entry name" value="Ig_2"/>
    <property type="match status" value="1"/>
</dbReference>
<dbReference type="Pfam" id="PF13927">
    <property type="entry name" value="Ig_3"/>
    <property type="match status" value="1"/>
</dbReference>
<dbReference type="Pfam" id="PF07686">
    <property type="entry name" value="V-set"/>
    <property type="match status" value="1"/>
</dbReference>
<dbReference type="SMART" id="SM00409">
    <property type="entry name" value="IG"/>
    <property type="match status" value="3"/>
</dbReference>
<dbReference type="SMART" id="SM00408">
    <property type="entry name" value="IGc2"/>
    <property type="match status" value="2"/>
</dbReference>
<dbReference type="SUPFAM" id="SSF48726">
    <property type="entry name" value="Immunoglobulin"/>
    <property type="match status" value="3"/>
</dbReference>
<dbReference type="PROSITE" id="PS50835">
    <property type="entry name" value="IG_LIKE"/>
    <property type="match status" value="2"/>
</dbReference>
<comment type="function">
    <text evidence="4 6 10">Cell surface glycoprotein that plays a role in cell adhesion in a calcium-independent manner (PubMed:11590190, PubMed:2022629, PubMed:8776764). Mediates heterophilic cell adhesion with other carcinoembryonic antigen-related cell adhesion molecules, such as CEACAM6 (PubMed:11590190, PubMed:2022629, PubMed:8776764). Heterophilic interaction with CEACAM8 occurs in activated neutrophils (PubMed:8776764).</text>
</comment>
<comment type="subunit">
    <text evidence="9">Monomer. Heterodimer with CEACAM6; heterodimerizes via its Ig-like V-type domain.</text>
</comment>
<comment type="interaction">
    <interactant intactId="EBI-4314540">
        <id>P31997</id>
    </interactant>
    <interactant intactId="EBI-4314501">
        <id>P40199</id>
        <label>CEACAM6</label>
    </interactant>
    <organismsDiffer>false</organismsDiffer>
    <experiments>5</experiments>
</comment>
<comment type="subcellular location">
    <subcellularLocation>
        <location evidence="7">Cell membrane</location>
        <topology evidence="7">Lipid-anchor</topology>
        <topology evidence="7">GPI-anchor</topology>
    </subcellularLocation>
    <subcellularLocation>
        <location evidence="10">Cell surface</location>
    </subcellularLocation>
</comment>
<comment type="tissue specificity">
    <text>Expressed in leukocytes of chronic myeloid Leukemia patients and bone marrow.</text>
</comment>
<comment type="domain">
    <text evidence="4">The N-terminus Ig-like V-type domain is necessary for heterophilic intercellular adhesion.</text>
</comment>
<comment type="PTM">
    <text evidence="9">Glycosylated.</text>
</comment>
<comment type="similarity">
    <text evidence="14">Belongs to the immunoglobulin superfamily. CEA family.</text>
</comment>
<reference key="1">
    <citation type="journal article" date="1990" name="Cancer Res.">
        <title>Cloning of a carcinoembryonic antigen gene family member expressed in leukocytes of chronic myeloid leukemia patients and bone marrow.</title>
        <authorList>
            <person name="Berling B."/>
            <person name="Kolbinger F."/>
            <person name="Grunert F."/>
            <person name="Thompson J.A."/>
            <person name="Brombacher F."/>
            <person name="Buchegger F."/>
            <person name="Vkleist S."/>
            <person name="Zimmermann W."/>
        </authorList>
    </citation>
    <scope>NUCLEOTIDE SEQUENCE [MRNA]</scope>
    <scope>GPI-ANCHOR AT ASP-320</scope>
    <source>
        <tissue>Spleen</tissue>
    </source>
</reference>
<reference key="2">
    <citation type="journal article" date="1990" name="Biochem. Biophys. Res. Commun.">
        <title>Characterization of a cDNA clone encoding a new species of the nonspecific cross-reacting antigen (NCA), a member of the CEA gene family.</title>
        <authorList>
            <person name="Arakawa F."/>
            <person name="Kuroki M."/>
            <person name="Misumi Y."/>
            <person name="Oikawa S."/>
            <person name="Nakazato H."/>
            <person name="Matsuoka Y."/>
        </authorList>
    </citation>
    <scope>NUCLEOTIDE SEQUENCE [MRNA]</scope>
    <scope>VARIANT VAL-322</scope>
</reference>
<reference key="3">
    <citation type="journal article" date="1992" name="Genomics">
        <title>Identification of three new genes and estimation of the size of the carcinoembryonic antigen family.</title>
        <authorList>
            <person name="Khan W.N."/>
            <person name="Fraengsmyr L."/>
            <person name="Teglund S."/>
            <person name="Israelsson A."/>
            <person name="Bremer K."/>
            <person name="Hammarstroem S."/>
        </authorList>
    </citation>
    <scope>NUCLEOTIDE SEQUENCE [MRNA]</scope>
</reference>
<reference key="4">
    <citation type="journal article" date="2004" name="Nature">
        <title>The DNA sequence and biology of human chromosome 19.</title>
        <authorList>
            <person name="Grimwood J."/>
            <person name="Gordon L.A."/>
            <person name="Olsen A.S."/>
            <person name="Terry A."/>
            <person name="Schmutz J."/>
            <person name="Lamerdin J.E."/>
            <person name="Hellsten U."/>
            <person name="Goodstein D."/>
            <person name="Couronne O."/>
            <person name="Tran-Gyamfi M."/>
            <person name="Aerts A."/>
            <person name="Altherr M."/>
            <person name="Ashworth L."/>
            <person name="Bajorek E."/>
            <person name="Black S."/>
            <person name="Branscomb E."/>
            <person name="Caenepeel S."/>
            <person name="Carrano A.V."/>
            <person name="Caoile C."/>
            <person name="Chan Y.M."/>
            <person name="Christensen M."/>
            <person name="Cleland C.A."/>
            <person name="Copeland A."/>
            <person name="Dalin E."/>
            <person name="Dehal P."/>
            <person name="Denys M."/>
            <person name="Detter J.C."/>
            <person name="Escobar J."/>
            <person name="Flowers D."/>
            <person name="Fotopulos D."/>
            <person name="Garcia C."/>
            <person name="Georgescu A.M."/>
            <person name="Glavina T."/>
            <person name="Gomez M."/>
            <person name="Gonzales E."/>
            <person name="Groza M."/>
            <person name="Hammon N."/>
            <person name="Hawkins T."/>
            <person name="Haydu L."/>
            <person name="Ho I."/>
            <person name="Huang W."/>
            <person name="Israni S."/>
            <person name="Jett J."/>
            <person name="Kadner K."/>
            <person name="Kimball H."/>
            <person name="Kobayashi A."/>
            <person name="Larionov V."/>
            <person name="Leem S.-H."/>
            <person name="Lopez F."/>
            <person name="Lou Y."/>
            <person name="Lowry S."/>
            <person name="Malfatti S."/>
            <person name="Martinez D."/>
            <person name="McCready P.M."/>
            <person name="Medina C."/>
            <person name="Morgan J."/>
            <person name="Nelson K."/>
            <person name="Nolan M."/>
            <person name="Ovcharenko I."/>
            <person name="Pitluck S."/>
            <person name="Pollard M."/>
            <person name="Popkie A.P."/>
            <person name="Predki P."/>
            <person name="Quan G."/>
            <person name="Ramirez L."/>
            <person name="Rash S."/>
            <person name="Retterer J."/>
            <person name="Rodriguez A."/>
            <person name="Rogers S."/>
            <person name="Salamov A."/>
            <person name="Salazar A."/>
            <person name="She X."/>
            <person name="Smith D."/>
            <person name="Slezak T."/>
            <person name="Solovyev V."/>
            <person name="Thayer N."/>
            <person name="Tice H."/>
            <person name="Tsai M."/>
            <person name="Ustaszewska A."/>
            <person name="Vo N."/>
            <person name="Wagner M."/>
            <person name="Wheeler J."/>
            <person name="Wu K."/>
            <person name="Xie G."/>
            <person name="Yang J."/>
            <person name="Dubchak I."/>
            <person name="Furey T.S."/>
            <person name="DeJong P."/>
            <person name="Dickson M."/>
            <person name="Gordon D."/>
            <person name="Eichler E.E."/>
            <person name="Pennacchio L.A."/>
            <person name="Richardson P."/>
            <person name="Stubbs L."/>
            <person name="Rokhsar D.S."/>
            <person name="Myers R.M."/>
            <person name="Rubin E.M."/>
            <person name="Lucas S.M."/>
        </authorList>
    </citation>
    <scope>NUCLEOTIDE SEQUENCE [LARGE SCALE GENOMIC DNA]</scope>
</reference>
<reference key="5">
    <citation type="journal article" date="2004" name="Genome Res.">
        <title>The status, quality, and expansion of the NIH full-length cDNA project: the Mammalian Gene Collection (MGC).</title>
        <authorList>
            <consortium name="The MGC Project Team"/>
        </authorList>
    </citation>
    <scope>NUCLEOTIDE SEQUENCE [LARGE SCALE MRNA]</scope>
    <source>
        <tissue>Lung</tissue>
    </source>
</reference>
<reference key="6">
    <citation type="journal article" date="1998" name="Blood">
        <title>Mice transgenic for the human CGM6 gene express its product, the granulocyte marker CD66b, exclusively in granulocytes.</title>
        <authorList>
            <person name="Eades-Perner A."/>
            <person name="Thompson J."/>
            <person name="van der Putten H."/>
            <person name="Zimmermann W."/>
        </authorList>
    </citation>
    <scope>NUCLEOTIDE SEQUENCE [GENOMIC DNA] OF 1-21</scope>
</reference>
<reference key="7">
    <citation type="journal article" date="1996" name="Protein Expr. Purif.">
        <title>Preparation and characterization of two human carcinoembryonic antigen family proteins of neutrophils, CD66b and c, in silkworm larvae.</title>
        <authorList>
            <person name="Yamanaka T."/>
            <person name="Kuroki M."/>
            <person name="Kinugasa T."/>
            <person name="Matsuo Y."/>
            <person name="Matsuoka Y."/>
        </authorList>
    </citation>
    <scope>FUNCTION</scope>
    <scope>SUBCELLULAR LOCATION</scope>
</reference>
<reference key="8">
    <citation type="journal article" date="1991" name="J. Biol. Chem.">
        <title>A specific heterotypic cell adhesion activity between members of carcinoembryonic antigen family, W272 and NCA, is mediated by N-domains.</title>
        <authorList>
            <person name="Oikawa S."/>
            <person name="Inuzuka C."/>
            <person name="Kuroki M."/>
            <person name="Arakawa F."/>
            <person name="Matsuoka Y."/>
            <person name="Kosaki G."/>
            <person name="Nakazato H."/>
        </authorList>
    </citation>
    <scope>FUNCTION</scope>
</reference>
<reference key="9">
    <citation type="journal article" date="2001" name="J. Leukoc. Biol.">
        <title>Identification and comparison of residues critical for cell-adhesion activities of two neutrophil CD66 antigens, CEACAM6 and CEACAM8.</title>
        <authorList>
            <person name="Kuroki M."/>
            <person name="Abe H."/>
            <person name="Imakiirei T."/>
            <person name="Liao S."/>
            <person name="Uchida H."/>
            <person name="Yamauchi Y."/>
            <person name="Oikawa S."/>
            <person name="Kuroki M."/>
        </authorList>
    </citation>
    <scope>FUNCTION</scope>
    <scope>DOMAIN</scope>
    <scope>MUTAGENESIS OF 40-ALA--ALA-45; 61-ASP--ARG-63; ASN-66; 72-THR--ALA-75; ARG-78; 85-SER--ILE-89 AND ASN-97</scope>
</reference>
<reference key="10">
    <citation type="journal article" date="2006" name="J. Proteome Res.">
        <title>Identification of N-linked glycoproteins in human saliva by glycoprotein capture and mass spectrometry.</title>
        <authorList>
            <person name="Ramachandran P."/>
            <person name="Boontheung P."/>
            <person name="Xie Y."/>
            <person name="Sondej M."/>
            <person name="Wong D.T."/>
            <person name="Loo J.A."/>
        </authorList>
    </citation>
    <scope>GLYCOSYLATION [LARGE SCALE ANALYSIS] AT ASN-288</scope>
    <source>
        <tissue>Saliva</tissue>
    </source>
</reference>
<reference key="11">
    <citation type="submission" date="2007-05" db="PDB data bank">
        <title>Solution structure of the first Ig-like domain of human carcinoembryonic antigen related cell adhesion molecule 8.</title>
        <authorList>
            <consortium name="RIKEN structural genomics initiative (RSGI)"/>
        </authorList>
    </citation>
    <scope>STRUCTURE BY NMR OF 33-154</scope>
</reference>
<reference evidence="17" key="12">
    <citation type="submission" date="2014-10" db="PDB data bank">
        <title>Human CEACAM6-CEACAM8 N-domain heterodimer complex.</title>
        <authorList>
            <person name="Kirouac K.N."/>
            <person name="Prive G.G."/>
        </authorList>
    </citation>
    <scope>X-RAY CRYSTALLOGRAPHY (2.52 ANGSTROMS) OF 34-141 IN COMPLEX WITH CEACAM6</scope>
</reference>
<reference evidence="18 19" key="13">
    <citation type="journal article" date="2015" name="Proc. Natl. Acad. Sci. U.S.A.">
        <title>Diverse oligomeric states of CEACAM IgV domains.</title>
        <authorList>
            <person name="Bonsor D.A."/>
            <person name="Gunther S."/>
            <person name="Beadenkopf R."/>
            <person name="Beckett D."/>
            <person name="Sundberg E.J."/>
        </authorList>
    </citation>
    <scope>X-RAY CRYSTALLOGRAPHY (1.45 ANGSTROMS) OF 34-141 IN COMPLEX WITH CEACAM6</scope>
    <scope>SUBUNIT</scope>
    <scope>GLYCOSYLATION</scope>
    <scope>MUTAGENESIS OF ARG-78; GLN-123 AND LEU-129</scope>
</reference>
<gene>
    <name evidence="16" type="primary">CEACAM8</name>
    <name evidence="13" type="synonym">CGM6</name>
</gene>
<keyword id="KW-0002">3D-structure</keyword>
<keyword id="KW-0130">Cell adhesion</keyword>
<keyword id="KW-1003">Cell membrane</keyword>
<keyword id="KW-1015">Disulfide bond</keyword>
<keyword id="KW-0325">Glycoprotein</keyword>
<keyword id="KW-0336">GPI-anchor</keyword>
<keyword id="KW-0393">Immunoglobulin domain</keyword>
<keyword id="KW-0449">Lipoprotein</keyword>
<keyword id="KW-0472">Membrane</keyword>
<keyword id="KW-1267">Proteomics identification</keyword>
<keyword id="KW-1185">Reference proteome</keyword>
<keyword id="KW-0677">Repeat</keyword>
<keyword id="KW-0732">Signal</keyword>
<proteinExistence type="evidence at protein level"/>
<sequence length="349" mass="38154">MGPISAPSCRWRIPWQGLLLTASLFTFWNPPTTAQLTIEAVPSNAAEGKEVLLLVHNLPQDPRGYNWYKGETVDANRRIIGYVISNQQITPGPAYSNRETIYPNASLLMRNVTRNDTGSYTLQVIKLNLMSEEVTGQFSVHPETPKPSISSNNSNPVEDKDAVAFTCEPETQNTTYLWWVNGQSLPVSPRLQLSNGNRTLTLLSVTRNDVGPYECEIQNPASANFSDPVTLNVLYGPDAPTISPSDTYYHAGVNLNLSCHAASNPPSQYSWSVNGTFQQYTQKLFIPNITTKNSGSYACHTTNSATGRNRTTVRMITVSDALVQGSSPGLSARATVSIMIGVLARVALI</sequence>
<feature type="signal peptide">
    <location>
        <begin position="1"/>
        <end position="34"/>
    </location>
</feature>
<feature type="chain" id="PRO_0000014572" description="Cell adhesion molecule CEACAM8">
    <location>
        <begin position="35"/>
        <end position="320"/>
    </location>
</feature>
<feature type="propeptide" id="PRO_0000014573" description="Removed in mature form">
    <location>
        <begin position="321"/>
        <end position="349"/>
    </location>
</feature>
<feature type="domain" description="Ig-like V-type" evidence="1 15">
    <location>
        <begin position="35"/>
        <end position="142"/>
    </location>
</feature>
<feature type="domain" description="Ig-like C2-type 1" evidence="2">
    <location>
        <begin position="145"/>
        <end position="232"/>
    </location>
</feature>
<feature type="domain" description="Ig-like C2-type 2" evidence="2">
    <location>
        <begin position="237"/>
        <end position="319"/>
    </location>
</feature>
<feature type="lipid moiety-binding region" description="GPI-anchor amidated aspartate" evidence="7">
    <location>
        <position position="320"/>
    </location>
</feature>
<feature type="glycosylation site" description="N-linked (GlcNAc...) asparagine" evidence="3">
    <location>
        <position position="104"/>
    </location>
</feature>
<feature type="glycosylation site" description="N-linked (GlcNAc...) asparagine" evidence="3">
    <location>
        <position position="111"/>
    </location>
</feature>
<feature type="glycosylation site" description="N-linked (GlcNAc...) asparagine" evidence="3">
    <location>
        <position position="115"/>
    </location>
</feature>
<feature type="glycosylation site" description="N-linked (GlcNAc...) asparagine" evidence="3">
    <location>
        <position position="152"/>
    </location>
</feature>
<feature type="glycosylation site" description="N-linked (GlcNAc...) asparagine" evidence="3">
    <location>
        <position position="173"/>
    </location>
</feature>
<feature type="glycosylation site" description="N-linked (GlcNAc...) asparagine" evidence="3">
    <location>
        <position position="197"/>
    </location>
</feature>
<feature type="glycosylation site" description="N-linked (GlcNAc...) asparagine" evidence="3">
    <location>
        <position position="224"/>
    </location>
</feature>
<feature type="glycosylation site" description="N-linked (GlcNAc...) asparagine" evidence="3">
    <location>
        <position position="256"/>
    </location>
</feature>
<feature type="glycosylation site" description="N-linked (GlcNAc...) asparagine" evidence="3">
    <location>
        <position position="274"/>
    </location>
</feature>
<feature type="glycosylation site" description="N-linked (GlcNAc...) asparagine" evidence="3 5">
    <location>
        <position position="288"/>
    </location>
</feature>
<feature type="glycosylation site" description="N-linked (GlcNAc...) asparagine" evidence="3">
    <location>
        <position position="309"/>
    </location>
</feature>
<feature type="disulfide bond" evidence="2">
    <location>
        <begin position="167"/>
        <end position="215"/>
    </location>
</feature>
<feature type="disulfide bond" evidence="2">
    <location>
        <begin position="259"/>
        <end position="299"/>
    </location>
</feature>
<feature type="sequence variant" id="VAR_049849" description="In dbSNP:rs28367882.">
    <original>G</original>
    <variation>V</variation>
    <location>
        <position position="17"/>
    </location>
</feature>
<feature type="sequence variant" id="VAR_049850" description="In dbSNP:rs35221575.">
    <original>A</original>
    <variation>V</variation>
    <location>
        <position position="45"/>
    </location>
</feature>
<feature type="sequence variant" id="VAR_011721" description="In dbSNP:rs1041997.">
    <original>R</original>
    <variation>K</variation>
    <location>
        <position position="114"/>
    </location>
</feature>
<feature type="sequence variant" id="VAR_049851" description="In dbSNP:rs1126458." evidence="8">
    <original>L</original>
    <variation>V</variation>
    <location>
        <position position="322"/>
    </location>
</feature>
<feature type="sequence variant" id="VAR_049852" description="In dbSNP:rs8103051.">
    <original>I</original>
    <variation>M</variation>
    <location>
        <position position="340"/>
    </location>
</feature>
<feature type="mutagenesis site" description="No effect on heterophilic cell adhesion." evidence="4">
    <original>AVPSNA</original>
    <variation>STPFNV</variation>
    <location>
        <begin position="40"/>
        <end position="45"/>
    </location>
</feature>
<feature type="mutagenesis site" description="No effect on heterophilic cell adhesion." evidence="4">
    <original>DPR</original>
    <variation>NRI</variation>
    <location>
        <begin position="61"/>
        <end position="63"/>
    </location>
</feature>
<feature type="mutagenesis site" description="Inhibits heterophilic cell adhesion." evidence="4">
    <original>N</original>
    <variation>S</variation>
    <location>
        <position position="66"/>
    </location>
</feature>
<feature type="mutagenesis site" description="No effect on heterophilic cell adhesion." evidence="4">
    <original>TVDA</original>
    <variation>RVDG</variation>
    <location>
        <begin position="72"/>
        <end position="75"/>
    </location>
</feature>
<feature type="mutagenesis site" description="Does not affect the monomeric structure. Loss of heterodimerization with CEACAM6." evidence="9">
    <original>R</original>
    <variation>A</variation>
    <location>
        <position position="78"/>
    </location>
</feature>
<feature type="mutagenesis site" description="Inhibits heterophilic cell adhesion." evidence="4">
    <original>R</original>
    <variation>Q</variation>
    <location>
        <position position="78"/>
    </location>
</feature>
<feature type="mutagenesis site" description="No effect on heterophilic cell adhesion." evidence="4">
    <original>SNQQI</original>
    <variation>GTQQA</variation>
    <location>
        <begin position="85"/>
        <end position="89"/>
    </location>
</feature>
<feature type="mutagenesis site" description="No effect on heterophilic cell adhesion." evidence="4">
    <original>N</original>
    <variation>G</variation>
    <location>
        <position position="97"/>
    </location>
</feature>
<feature type="mutagenesis site" description="Does not affect the monomeric structure. Decreases heterodimerization with CEACAM6." evidence="9">
    <original>Q</original>
    <variation>A</variation>
    <location>
        <position position="123"/>
    </location>
</feature>
<feature type="mutagenesis site" description="Does not affect the monomeric structure. Loss of heterodimerization with CEACAM6." evidence="9">
    <original>L</original>
    <variation>A</variation>
    <location>
        <position position="129"/>
    </location>
</feature>
<feature type="strand" evidence="21">
    <location>
        <begin position="37"/>
        <end position="46"/>
    </location>
</feature>
<feature type="strand" evidence="21">
    <location>
        <begin position="51"/>
        <end position="56"/>
    </location>
</feature>
<feature type="strand" evidence="21">
    <location>
        <begin position="64"/>
        <end position="72"/>
    </location>
</feature>
<feature type="helix" evidence="21">
    <location>
        <begin position="75"/>
        <end position="77"/>
    </location>
</feature>
<feature type="strand" evidence="21">
    <location>
        <begin position="78"/>
        <end position="83"/>
    </location>
</feature>
<feature type="turn" evidence="21">
    <location>
        <begin position="84"/>
        <end position="87"/>
    </location>
</feature>
<feature type="strand" evidence="21">
    <location>
        <begin position="88"/>
        <end position="91"/>
    </location>
</feature>
<feature type="strand" evidence="21">
    <location>
        <begin position="99"/>
        <end position="101"/>
    </location>
</feature>
<feature type="strand" evidence="21">
    <location>
        <begin position="107"/>
        <end position="109"/>
    </location>
</feature>
<feature type="helix" evidence="21">
    <location>
        <begin position="114"/>
        <end position="116"/>
    </location>
</feature>
<feature type="strand" evidence="21">
    <location>
        <begin position="118"/>
        <end position="125"/>
    </location>
</feature>
<feature type="turn" evidence="20">
    <location>
        <begin position="127"/>
        <end position="129"/>
    </location>
</feature>
<feature type="strand" evidence="21">
    <location>
        <begin position="131"/>
        <end position="141"/>
    </location>
</feature>
<protein>
    <recommendedName>
        <fullName evidence="14">Cell adhesion molecule CEACAM8</fullName>
    </recommendedName>
    <alternativeName>
        <fullName>CD67 antigen</fullName>
    </alternativeName>
    <alternativeName>
        <fullName evidence="13">Carcinoembryonic antigen CGM6</fullName>
    </alternativeName>
    <alternativeName>
        <fullName>Carcinoembryonic antigen-related cell adhesion molecule 8</fullName>
        <shortName evidence="16">CEA cell adhesion molecule 8</shortName>
    </alternativeName>
    <alternativeName>
        <fullName evidence="11">Non-specific cross-reacting antigen NCA-95</fullName>
    </alternativeName>
    <cdAntigenName evidence="12">CD66b</cdAntigenName>
</protein>
<name>CEAM8_HUMAN</name>
<organism>
    <name type="scientific">Homo sapiens</name>
    <name type="common">Human</name>
    <dbReference type="NCBI Taxonomy" id="9606"/>
    <lineage>
        <taxon>Eukaryota</taxon>
        <taxon>Metazoa</taxon>
        <taxon>Chordata</taxon>
        <taxon>Craniata</taxon>
        <taxon>Vertebrata</taxon>
        <taxon>Euteleostomi</taxon>
        <taxon>Mammalia</taxon>
        <taxon>Eutheria</taxon>
        <taxon>Euarchontoglires</taxon>
        <taxon>Primates</taxon>
        <taxon>Haplorrhini</taxon>
        <taxon>Catarrhini</taxon>
        <taxon>Hominidae</taxon>
        <taxon>Homo</taxon>
    </lineage>
</organism>
<accession>P31997</accession>
<accession>O60399</accession>
<accession>Q16574</accession>
<evidence type="ECO:0000255" key="1"/>
<evidence type="ECO:0000255" key="2">
    <source>
        <dbReference type="PROSITE-ProRule" id="PRU00114"/>
    </source>
</evidence>
<evidence type="ECO:0000255" key="3">
    <source>
        <dbReference type="PROSITE-ProRule" id="PRU00498"/>
    </source>
</evidence>
<evidence type="ECO:0000269" key="4">
    <source>
    </source>
</evidence>
<evidence type="ECO:0000269" key="5">
    <source>
    </source>
</evidence>
<evidence type="ECO:0000269" key="6">
    <source>
    </source>
</evidence>
<evidence type="ECO:0000269" key="7">
    <source>
    </source>
</evidence>
<evidence type="ECO:0000269" key="8">
    <source>
    </source>
</evidence>
<evidence type="ECO:0000269" key="9">
    <source>
    </source>
</evidence>
<evidence type="ECO:0000269" key="10">
    <source>
    </source>
</evidence>
<evidence type="ECO:0000303" key="11">
    <source>
    </source>
</evidence>
<evidence type="ECO:0000303" key="12">
    <source>
    </source>
</evidence>
<evidence type="ECO:0000303" key="13">
    <source>
    </source>
</evidence>
<evidence type="ECO:0000305" key="14"/>
<evidence type="ECO:0000305" key="15">
    <source>
    </source>
</evidence>
<evidence type="ECO:0000312" key="16">
    <source>
        <dbReference type="HGNC" id="HGNC:1820"/>
    </source>
</evidence>
<evidence type="ECO:0007744" key="17">
    <source>
        <dbReference type="PDB" id="4WTZ"/>
    </source>
</evidence>
<evidence type="ECO:0007744" key="18">
    <source>
        <dbReference type="PDB" id="4Y88"/>
    </source>
</evidence>
<evidence type="ECO:0007744" key="19">
    <source>
        <dbReference type="PDB" id="4YIQ"/>
    </source>
</evidence>
<evidence type="ECO:0007829" key="20">
    <source>
        <dbReference type="PDB" id="2DKS"/>
    </source>
</evidence>
<evidence type="ECO:0007829" key="21">
    <source>
        <dbReference type="PDB" id="4Y88"/>
    </source>
</evidence>